<comment type="function">
    <text evidence="1">Catalyzes the cyclization of GTP to (8S)-3',8-cyclo-7,8-dihydroguanosine 5'-triphosphate.</text>
</comment>
<comment type="catalytic activity">
    <reaction evidence="1">
        <text>GTP + AH2 + S-adenosyl-L-methionine = (8S)-3',8-cyclo-7,8-dihydroguanosine 5'-triphosphate + 5'-deoxyadenosine + L-methionine + A + H(+)</text>
        <dbReference type="Rhea" id="RHEA:49576"/>
        <dbReference type="ChEBI" id="CHEBI:13193"/>
        <dbReference type="ChEBI" id="CHEBI:15378"/>
        <dbReference type="ChEBI" id="CHEBI:17319"/>
        <dbReference type="ChEBI" id="CHEBI:17499"/>
        <dbReference type="ChEBI" id="CHEBI:37565"/>
        <dbReference type="ChEBI" id="CHEBI:57844"/>
        <dbReference type="ChEBI" id="CHEBI:59789"/>
        <dbReference type="ChEBI" id="CHEBI:131766"/>
        <dbReference type="EC" id="4.1.99.22"/>
    </reaction>
</comment>
<comment type="cofactor">
    <cofactor evidence="1">
        <name>[4Fe-4S] cluster</name>
        <dbReference type="ChEBI" id="CHEBI:49883"/>
    </cofactor>
    <text evidence="1">Binds 2 [4Fe-4S] clusters. Binds 1 [4Fe-4S] cluster coordinated with 3 cysteines and an exchangeable S-adenosyl-L-methionine and 1 [4Fe-4S] cluster coordinated with 3 cysteines and the GTP-derived substrate.</text>
</comment>
<comment type="pathway">
    <text evidence="1">Cofactor biosynthesis; molybdopterin biosynthesis.</text>
</comment>
<comment type="subunit">
    <text evidence="1">Monomer and homodimer.</text>
</comment>
<comment type="similarity">
    <text evidence="1">Belongs to the radical SAM superfamily. MoaA family.</text>
</comment>
<organism>
    <name type="scientific">Xanthomonas campestris pv. campestris (strain 8004)</name>
    <dbReference type="NCBI Taxonomy" id="314565"/>
    <lineage>
        <taxon>Bacteria</taxon>
        <taxon>Pseudomonadati</taxon>
        <taxon>Pseudomonadota</taxon>
        <taxon>Gammaproteobacteria</taxon>
        <taxon>Lysobacterales</taxon>
        <taxon>Lysobacteraceae</taxon>
        <taxon>Xanthomonas</taxon>
    </lineage>
</organism>
<protein>
    <recommendedName>
        <fullName evidence="1">GTP 3',8-cyclase</fullName>
        <ecNumber evidence="1">4.1.99.22</ecNumber>
    </recommendedName>
    <alternativeName>
        <fullName evidence="1">Molybdenum cofactor biosynthesis protein A</fullName>
    </alternativeName>
</protein>
<gene>
    <name evidence="1" type="primary">moaA</name>
    <name type="ordered locus">XC_3249</name>
</gene>
<dbReference type="EC" id="4.1.99.22" evidence="1"/>
<dbReference type="EMBL" id="CP000050">
    <property type="protein sequence ID" value="AAY50293.1"/>
    <property type="molecule type" value="Genomic_DNA"/>
</dbReference>
<dbReference type="SMR" id="Q4URN0"/>
<dbReference type="KEGG" id="xcb:XC_3249"/>
<dbReference type="HOGENOM" id="CLU_009273_0_1_6"/>
<dbReference type="UniPathway" id="UPA00344"/>
<dbReference type="Proteomes" id="UP000000420">
    <property type="component" value="Chromosome"/>
</dbReference>
<dbReference type="GO" id="GO:0051539">
    <property type="term" value="F:4 iron, 4 sulfur cluster binding"/>
    <property type="evidence" value="ECO:0007669"/>
    <property type="project" value="UniProtKB-UniRule"/>
</dbReference>
<dbReference type="GO" id="GO:0061799">
    <property type="term" value="F:cyclic pyranopterin monophosphate synthase activity"/>
    <property type="evidence" value="ECO:0007669"/>
    <property type="project" value="TreeGrafter"/>
</dbReference>
<dbReference type="GO" id="GO:0061798">
    <property type="term" value="F:GTP 3',8'-cyclase activity"/>
    <property type="evidence" value="ECO:0007669"/>
    <property type="project" value="UniProtKB-UniRule"/>
</dbReference>
<dbReference type="GO" id="GO:0005525">
    <property type="term" value="F:GTP binding"/>
    <property type="evidence" value="ECO:0007669"/>
    <property type="project" value="UniProtKB-UniRule"/>
</dbReference>
<dbReference type="GO" id="GO:0046872">
    <property type="term" value="F:metal ion binding"/>
    <property type="evidence" value="ECO:0007669"/>
    <property type="project" value="UniProtKB-KW"/>
</dbReference>
<dbReference type="GO" id="GO:1904047">
    <property type="term" value="F:S-adenosyl-L-methionine binding"/>
    <property type="evidence" value="ECO:0007669"/>
    <property type="project" value="UniProtKB-UniRule"/>
</dbReference>
<dbReference type="GO" id="GO:0006777">
    <property type="term" value="P:Mo-molybdopterin cofactor biosynthetic process"/>
    <property type="evidence" value="ECO:0007669"/>
    <property type="project" value="UniProtKB-UniRule"/>
</dbReference>
<dbReference type="CDD" id="cd01335">
    <property type="entry name" value="Radical_SAM"/>
    <property type="match status" value="1"/>
</dbReference>
<dbReference type="CDD" id="cd21117">
    <property type="entry name" value="Twitch_MoaA"/>
    <property type="match status" value="1"/>
</dbReference>
<dbReference type="Gene3D" id="3.20.20.70">
    <property type="entry name" value="Aldolase class I"/>
    <property type="match status" value="1"/>
</dbReference>
<dbReference type="HAMAP" id="MF_01225_B">
    <property type="entry name" value="MoaA_B"/>
    <property type="match status" value="1"/>
</dbReference>
<dbReference type="InterPro" id="IPR013785">
    <property type="entry name" value="Aldolase_TIM"/>
</dbReference>
<dbReference type="InterPro" id="IPR006638">
    <property type="entry name" value="Elp3/MiaA/NifB-like_rSAM"/>
</dbReference>
<dbReference type="InterPro" id="IPR013483">
    <property type="entry name" value="MoaA"/>
</dbReference>
<dbReference type="InterPro" id="IPR000385">
    <property type="entry name" value="MoaA_NifB_PqqE_Fe-S-bd_CS"/>
</dbReference>
<dbReference type="InterPro" id="IPR010505">
    <property type="entry name" value="MoaA_twitch"/>
</dbReference>
<dbReference type="InterPro" id="IPR050105">
    <property type="entry name" value="MoCo_biosynth_MoaA/MoaC"/>
</dbReference>
<dbReference type="InterPro" id="IPR007197">
    <property type="entry name" value="rSAM"/>
</dbReference>
<dbReference type="NCBIfam" id="TIGR02666">
    <property type="entry name" value="moaA"/>
    <property type="match status" value="1"/>
</dbReference>
<dbReference type="PANTHER" id="PTHR22960:SF0">
    <property type="entry name" value="MOLYBDENUM COFACTOR BIOSYNTHESIS PROTEIN 1"/>
    <property type="match status" value="1"/>
</dbReference>
<dbReference type="PANTHER" id="PTHR22960">
    <property type="entry name" value="MOLYBDOPTERIN COFACTOR SYNTHESIS PROTEIN A"/>
    <property type="match status" value="1"/>
</dbReference>
<dbReference type="Pfam" id="PF13353">
    <property type="entry name" value="Fer4_12"/>
    <property type="match status" value="1"/>
</dbReference>
<dbReference type="Pfam" id="PF06463">
    <property type="entry name" value="Mob_synth_C"/>
    <property type="match status" value="1"/>
</dbReference>
<dbReference type="Pfam" id="PF04055">
    <property type="entry name" value="Radical_SAM"/>
    <property type="match status" value="1"/>
</dbReference>
<dbReference type="SFLD" id="SFLDG01383">
    <property type="entry name" value="cyclic_pyranopterin_phosphate"/>
    <property type="match status" value="1"/>
</dbReference>
<dbReference type="SFLD" id="SFLDG01067">
    <property type="entry name" value="SPASM/twitch_domain_containing"/>
    <property type="match status" value="1"/>
</dbReference>
<dbReference type="SMART" id="SM00729">
    <property type="entry name" value="Elp3"/>
    <property type="match status" value="1"/>
</dbReference>
<dbReference type="SUPFAM" id="SSF102114">
    <property type="entry name" value="Radical SAM enzymes"/>
    <property type="match status" value="1"/>
</dbReference>
<dbReference type="PROSITE" id="PS01305">
    <property type="entry name" value="MOAA_NIFB_PQQE"/>
    <property type="match status" value="1"/>
</dbReference>
<dbReference type="PROSITE" id="PS51918">
    <property type="entry name" value="RADICAL_SAM"/>
    <property type="match status" value="1"/>
</dbReference>
<accession>Q4URN0</accession>
<feature type="chain" id="PRO_1000054240" description="GTP 3',8-cyclase">
    <location>
        <begin position="1"/>
        <end position="339"/>
    </location>
</feature>
<feature type="domain" description="Radical SAM core" evidence="2">
    <location>
        <begin position="13"/>
        <end position="249"/>
    </location>
</feature>
<feature type="binding site" evidence="1">
    <location>
        <position position="22"/>
    </location>
    <ligand>
        <name>GTP</name>
        <dbReference type="ChEBI" id="CHEBI:37565"/>
    </ligand>
</feature>
<feature type="binding site" evidence="1">
    <location>
        <position position="29"/>
    </location>
    <ligand>
        <name>[4Fe-4S] cluster</name>
        <dbReference type="ChEBI" id="CHEBI:49883"/>
        <label>1</label>
        <note>4Fe-4S-S-AdoMet</note>
    </ligand>
</feature>
<feature type="binding site" evidence="1">
    <location>
        <position position="33"/>
    </location>
    <ligand>
        <name>[4Fe-4S] cluster</name>
        <dbReference type="ChEBI" id="CHEBI:49883"/>
        <label>1</label>
        <note>4Fe-4S-S-AdoMet</note>
    </ligand>
</feature>
<feature type="binding site" evidence="1">
    <location>
        <position position="35"/>
    </location>
    <ligand>
        <name>S-adenosyl-L-methionine</name>
        <dbReference type="ChEBI" id="CHEBI:59789"/>
    </ligand>
</feature>
<feature type="binding site" evidence="1">
    <location>
        <position position="36"/>
    </location>
    <ligand>
        <name>[4Fe-4S] cluster</name>
        <dbReference type="ChEBI" id="CHEBI:49883"/>
        <label>1</label>
        <note>4Fe-4S-S-AdoMet</note>
    </ligand>
</feature>
<feature type="binding site" evidence="1">
    <location>
        <position position="75"/>
    </location>
    <ligand>
        <name>GTP</name>
        <dbReference type="ChEBI" id="CHEBI:37565"/>
    </ligand>
</feature>
<feature type="binding site" evidence="1">
    <location>
        <position position="79"/>
    </location>
    <ligand>
        <name>S-adenosyl-L-methionine</name>
        <dbReference type="ChEBI" id="CHEBI:59789"/>
    </ligand>
</feature>
<feature type="binding site" evidence="1">
    <location>
        <position position="106"/>
    </location>
    <ligand>
        <name>GTP</name>
        <dbReference type="ChEBI" id="CHEBI:37565"/>
    </ligand>
</feature>
<feature type="binding site" evidence="1">
    <location>
        <position position="130"/>
    </location>
    <ligand>
        <name>S-adenosyl-L-methionine</name>
        <dbReference type="ChEBI" id="CHEBI:59789"/>
    </ligand>
</feature>
<feature type="binding site" evidence="1">
    <location>
        <position position="168"/>
    </location>
    <ligand>
        <name>GTP</name>
        <dbReference type="ChEBI" id="CHEBI:37565"/>
    </ligand>
</feature>
<feature type="binding site" evidence="1">
    <location>
        <position position="202"/>
    </location>
    <ligand>
        <name>S-adenosyl-L-methionine</name>
        <dbReference type="ChEBI" id="CHEBI:59789"/>
    </ligand>
</feature>
<feature type="binding site" evidence="1">
    <location>
        <position position="266"/>
    </location>
    <ligand>
        <name>[4Fe-4S] cluster</name>
        <dbReference type="ChEBI" id="CHEBI:49883"/>
        <label>2</label>
        <note>4Fe-4S-substrate</note>
    </ligand>
</feature>
<feature type="binding site" evidence="1">
    <location>
        <position position="269"/>
    </location>
    <ligand>
        <name>[4Fe-4S] cluster</name>
        <dbReference type="ChEBI" id="CHEBI:49883"/>
        <label>2</label>
        <note>4Fe-4S-substrate</note>
    </ligand>
</feature>
<feature type="binding site" evidence="1">
    <location>
        <begin position="271"/>
        <end position="273"/>
    </location>
    <ligand>
        <name>GTP</name>
        <dbReference type="ChEBI" id="CHEBI:37565"/>
    </ligand>
</feature>
<feature type="binding site" evidence="1">
    <location>
        <position position="283"/>
    </location>
    <ligand>
        <name>[4Fe-4S] cluster</name>
        <dbReference type="ChEBI" id="CHEBI:49883"/>
        <label>2</label>
        <note>4Fe-4S-substrate</note>
    </ligand>
</feature>
<keyword id="KW-0004">4Fe-4S</keyword>
<keyword id="KW-0342">GTP-binding</keyword>
<keyword id="KW-0408">Iron</keyword>
<keyword id="KW-0411">Iron-sulfur</keyword>
<keyword id="KW-0456">Lyase</keyword>
<keyword id="KW-0479">Metal-binding</keyword>
<keyword id="KW-0501">Molybdenum cofactor biosynthesis</keyword>
<keyword id="KW-0547">Nucleotide-binding</keyword>
<keyword id="KW-0949">S-adenosyl-L-methionine</keyword>
<reference key="1">
    <citation type="journal article" date="2005" name="Genome Res.">
        <title>Comparative and functional genomic analyses of the pathogenicity of phytopathogen Xanthomonas campestris pv. campestris.</title>
        <authorList>
            <person name="Qian W."/>
            <person name="Jia Y."/>
            <person name="Ren S.-X."/>
            <person name="He Y.-Q."/>
            <person name="Feng J.-X."/>
            <person name="Lu L.-F."/>
            <person name="Sun Q."/>
            <person name="Ying G."/>
            <person name="Tang D.-J."/>
            <person name="Tang H."/>
            <person name="Wu W."/>
            <person name="Hao P."/>
            <person name="Wang L."/>
            <person name="Jiang B.-L."/>
            <person name="Zeng S."/>
            <person name="Gu W.-Y."/>
            <person name="Lu G."/>
            <person name="Rong L."/>
            <person name="Tian Y."/>
            <person name="Yao Z."/>
            <person name="Fu G."/>
            <person name="Chen B."/>
            <person name="Fang R."/>
            <person name="Qiang B."/>
            <person name="Chen Z."/>
            <person name="Zhao G.-P."/>
            <person name="Tang J.-L."/>
            <person name="He C."/>
        </authorList>
    </citation>
    <scope>NUCLEOTIDE SEQUENCE [LARGE SCALE GENOMIC DNA]</scope>
    <source>
        <strain>8004</strain>
    </source>
</reference>
<proteinExistence type="inferred from homology"/>
<name>MOAA_XANC8</name>
<evidence type="ECO:0000255" key="1">
    <source>
        <dbReference type="HAMAP-Rule" id="MF_01225"/>
    </source>
</evidence>
<evidence type="ECO:0000255" key="2">
    <source>
        <dbReference type="PROSITE-ProRule" id="PRU01266"/>
    </source>
</evidence>
<sequence length="339" mass="37363">MLPDLSAAPMQDRYGRPLRDLRLSVIEACNFRCGYCMPADRVPDDYGLDADQRLSFDQLETLVRAFVAVGVTKLRLTGGEPLLRKNLPVLIQRLAAIEGIEDLALTTNGALLARQAVALRQAGLRRITVSMDALEPALFRQMSGGRGEIDQVLAGIAAAEQAGFKRLKINCVVQRDVNEDQVLPLVEHFRGTGHVLRFIEFMDVGSCNGWRPEAVVTSAQLRDRIHARWPLAPLDANYTGEVAQRHAFADGLGEVGFVSSVSVPFCGDCQRARVSADGHLYTCLFASQGHDLKPALAEGEQGLATHLRQRWSVRADRYSEVRASTSRRRKPVEMFLIGG</sequence>